<feature type="chain" id="PRO_1000118420" description="Translation initiation factor 5A">
    <location>
        <begin position="1"/>
        <end position="132"/>
    </location>
</feature>
<feature type="modified residue" description="Hypusine" evidence="1">
    <location>
        <position position="36"/>
    </location>
</feature>
<name>IF5A_DESA1</name>
<comment type="function">
    <text evidence="1">Functions by promoting the formation of the first peptide bond.</text>
</comment>
<comment type="subcellular location">
    <subcellularLocation>
        <location evidence="1">Cytoplasm</location>
    </subcellularLocation>
</comment>
<comment type="similarity">
    <text evidence="1">Belongs to the eIF-5A family.</text>
</comment>
<evidence type="ECO:0000255" key="1">
    <source>
        <dbReference type="HAMAP-Rule" id="MF_00085"/>
    </source>
</evidence>
<keyword id="KW-0963">Cytoplasm</keyword>
<keyword id="KW-0385">Hypusine</keyword>
<keyword id="KW-0396">Initiation factor</keyword>
<keyword id="KW-0648">Protein biosynthesis</keyword>
<organism>
    <name type="scientific">Desulfurococcus amylolyticus (strain DSM 18924 / JCM 16383 / VKM B-2413 / 1221n)</name>
    <name type="common">Desulfurococcus kamchatkensis</name>
    <dbReference type="NCBI Taxonomy" id="490899"/>
    <lineage>
        <taxon>Archaea</taxon>
        <taxon>Thermoproteota</taxon>
        <taxon>Thermoprotei</taxon>
        <taxon>Desulfurococcales</taxon>
        <taxon>Desulfurococcaceae</taxon>
        <taxon>Desulfurococcus</taxon>
    </lineage>
</organism>
<proteinExistence type="inferred from homology"/>
<gene>
    <name type="primary">eIF5A</name>
    <name type="ordered locus">DKAM_0823</name>
</gene>
<accession>B8D4W8</accession>
<sequence length="132" mass="14690">MSKVYDTLGNLKVGSFIVIDGEPCRIVEMSRAKTGKHGSAKANVVAIGLFSKAKKTLVAPVDTQVEVPVIEKHVGQIIADMGTMYQVMDMETYETFEVEKDSIEEDIRNKLGVGSEVEYWVVMGKRLIIRPR</sequence>
<dbReference type="EMBL" id="CP001140">
    <property type="protein sequence ID" value="ACL11149.1"/>
    <property type="molecule type" value="Genomic_DNA"/>
</dbReference>
<dbReference type="RefSeq" id="WP_012608490.1">
    <property type="nucleotide sequence ID" value="NC_011766.1"/>
</dbReference>
<dbReference type="SMR" id="B8D4W8"/>
<dbReference type="STRING" id="490899.DKAM_0823"/>
<dbReference type="GeneID" id="7170973"/>
<dbReference type="KEGG" id="dka:DKAM_0823"/>
<dbReference type="eggNOG" id="arCOG04277">
    <property type="taxonomic scope" value="Archaea"/>
</dbReference>
<dbReference type="HOGENOM" id="CLU_102600_3_0_2"/>
<dbReference type="Proteomes" id="UP000006903">
    <property type="component" value="Chromosome"/>
</dbReference>
<dbReference type="GO" id="GO:0005737">
    <property type="term" value="C:cytoplasm"/>
    <property type="evidence" value="ECO:0007669"/>
    <property type="project" value="UniProtKB-SubCell"/>
</dbReference>
<dbReference type="GO" id="GO:0043022">
    <property type="term" value="F:ribosome binding"/>
    <property type="evidence" value="ECO:0007669"/>
    <property type="project" value="InterPro"/>
</dbReference>
<dbReference type="GO" id="GO:0003723">
    <property type="term" value="F:RNA binding"/>
    <property type="evidence" value="ECO:0007669"/>
    <property type="project" value="InterPro"/>
</dbReference>
<dbReference type="GO" id="GO:0003746">
    <property type="term" value="F:translation elongation factor activity"/>
    <property type="evidence" value="ECO:0007669"/>
    <property type="project" value="InterPro"/>
</dbReference>
<dbReference type="GO" id="GO:0003743">
    <property type="term" value="F:translation initiation factor activity"/>
    <property type="evidence" value="ECO:0007669"/>
    <property type="project" value="UniProtKB-UniRule"/>
</dbReference>
<dbReference type="GO" id="GO:0045901">
    <property type="term" value="P:positive regulation of translational elongation"/>
    <property type="evidence" value="ECO:0007669"/>
    <property type="project" value="InterPro"/>
</dbReference>
<dbReference type="GO" id="GO:0045905">
    <property type="term" value="P:positive regulation of translational termination"/>
    <property type="evidence" value="ECO:0007669"/>
    <property type="project" value="InterPro"/>
</dbReference>
<dbReference type="CDD" id="cd04467">
    <property type="entry name" value="S1_aIF5A"/>
    <property type="match status" value="1"/>
</dbReference>
<dbReference type="Gene3D" id="2.30.30.30">
    <property type="match status" value="1"/>
</dbReference>
<dbReference type="Gene3D" id="2.40.50.140">
    <property type="entry name" value="Nucleic acid-binding proteins"/>
    <property type="match status" value="1"/>
</dbReference>
<dbReference type="HAMAP" id="MF_00085">
    <property type="entry name" value="eIF_5A"/>
    <property type="match status" value="1"/>
</dbReference>
<dbReference type="InterPro" id="IPR001884">
    <property type="entry name" value="IF5A-like"/>
</dbReference>
<dbReference type="InterPro" id="IPR048670">
    <property type="entry name" value="IF5A-like_N"/>
</dbReference>
<dbReference type="InterPro" id="IPR012340">
    <property type="entry name" value="NA-bd_OB-fold"/>
</dbReference>
<dbReference type="InterPro" id="IPR014722">
    <property type="entry name" value="Rib_uL2_dom2"/>
</dbReference>
<dbReference type="InterPro" id="IPR019769">
    <property type="entry name" value="Trans_elong_IF5A_hypusine_site"/>
</dbReference>
<dbReference type="InterPro" id="IPR022847">
    <property type="entry name" value="Transl_elong_IF5A_arc"/>
</dbReference>
<dbReference type="InterPro" id="IPR020189">
    <property type="entry name" value="Transl_elong_IF5A_C"/>
</dbReference>
<dbReference type="InterPro" id="IPR008991">
    <property type="entry name" value="Translation_prot_SH3-like_sf"/>
</dbReference>
<dbReference type="NCBIfam" id="TIGR00037">
    <property type="entry name" value="eIF_5A"/>
    <property type="match status" value="1"/>
</dbReference>
<dbReference type="NCBIfam" id="NF003076">
    <property type="entry name" value="PRK03999.1"/>
    <property type="match status" value="1"/>
</dbReference>
<dbReference type="PANTHER" id="PTHR11673">
    <property type="entry name" value="TRANSLATION INITIATION FACTOR 5A FAMILY MEMBER"/>
    <property type="match status" value="1"/>
</dbReference>
<dbReference type="Pfam" id="PF01287">
    <property type="entry name" value="eIF-5a"/>
    <property type="match status" value="1"/>
</dbReference>
<dbReference type="Pfam" id="PF21485">
    <property type="entry name" value="IF5A-like_N"/>
    <property type="match status" value="1"/>
</dbReference>
<dbReference type="PIRSF" id="PIRSF003025">
    <property type="entry name" value="eIF5A"/>
    <property type="match status" value="1"/>
</dbReference>
<dbReference type="SMART" id="SM01376">
    <property type="entry name" value="eIF-5a"/>
    <property type="match status" value="1"/>
</dbReference>
<dbReference type="SUPFAM" id="SSF50249">
    <property type="entry name" value="Nucleic acid-binding proteins"/>
    <property type="match status" value="1"/>
</dbReference>
<dbReference type="SUPFAM" id="SSF50104">
    <property type="entry name" value="Translation proteins SH3-like domain"/>
    <property type="match status" value="1"/>
</dbReference>
<dbReference type="PROSITE" id="PS00302">
    <property type="entry name" value="IF5A_HYPUSINE"/>
    <property type="match status" value="1"/>
</dbReference>
<reference key="1">
    <citation type="journal article" date="2009" name="J. Bacteriol.">
        <title>Complete genome sequence of the anaerobic, protein-degrading hyperthermophilic crenarchaeon Desulfurococcus kamchatkensis.</title>
        <authorList>
            <person name="Ravin N.V."/>
            <person name="Mardanov A.V."/>
            <person name="Beletsky A.V."/>
            <person name="Kublanov I.V."/>
            <person name="Kolganova T.V."/>
            <person name="Lebedinsky A.V."/>
            <person name="Chernyh N.A."/>
            <person name="Bonch-Osmolovskaya E.A."/>
            <person name="Skryabin K.G."/>
        </authorList>
    </citation>
    <scope>NUCLEOTIDE SEQUENCE [LARGE SCALE GENOMIC DNA]</scope>
    <source>
        <strain>DSM 18924 / JCM 16383 / VKM B-2413 / 1221n</strain>
    </source>
</reference>
<protein>
    <recommendedName>
        <fullName evidence="1">Translation initiation factor 5A</fullName>
    </recommendedName>
    <alternativeName>
        <fullName evidence="1">Hypusine-containing protein</fullName>
    </alternativeName>
    <alternativeName>
        <fullName evidence="1">eIF-5A</fullName>
    </alternativeName>
</protein>